<protein>
    <recommendedName>
        <fullName>Pentatricopeptide repeat-containing protein At5g50990</fullName>
    </recommendedName>
</protein>
<evidence type="ECO:0000305" key="1"/>
<comment type="similarity">
    <text evidence="1">Belongs to the PPR family. PCMP-H subfamily.</text>
</comment>
<comment type="sequence caution" evidence="1">
    <conflict type="erroneous gene model prediction">
        <sequence resource="EMBL-CDS" id="BAB08745"/>
    </conflict>
</comment>
<comment type="online information" name="Pentatricopeptide repeat proteins">
    <link uri="https://ppr.plantenergy.uwa.edu.au"/>
</comment>
<dbReference type="EMBL" id="AB017063">
    <property type="protein sequence ID" value="BAB08745.1"/>
    <property type="status" value="ALT_SEQ"/>
    <property type="molecule type" value="Genomic_DNA"/>
</dbReference>
<dbReference type="EMBL" id="CP002688">
    <property type="protein sequence ID" value="AED96019.1"/>
    <property type="molecule type" value="Genomic_DNA"/>
</dbReference>
<dbReference type="RefSeq" id="NP_199912.2">
    <property type="nucleotide sequence ID" value="NM_124478.3"/>
</dbReference>
<dbReference type="SMR" id="Q9FI49"/>
<dbReference type="FunCoup" id="Q9FI49">
    <property type="interactions" value="308"/>
</dbReference>
<dbReference type="iPTMnet" id="Q9FI49"/>
<dbReference type="PaxDb" id="3702-AT5G50990.1"/>
<dbReference type="ProteomicsDB" id="249309"/>
<dbReference type="EnsemblPlants" id="AT5G50990.1">
    <property type="protein sequence ID" value="AT5G50990.1"/>
    <property type="gene ID" value="AT5G50990"/>
</dbReference>
<dbReference type="GeneID" id="835172"/>
<dbReference type="Gramene" id="AT5G50990.1">
    <property type="protein sequence ID" value="AT5G50990.1"/>
    <property type="gene ID" value="AT5G50990"/>
</dbReference>
<dbReference type="KEGG" id="ath:AT5G50990"/>
<dbReference type="Araport" id="AT5G50990"/>
<dbReference type="TAIR" id="AT5G50990"/>
<dbReference type="eggNOG" id="KOG4197">
    <property type="taxonomic scope" value="Eukaryota"/>
</dbReference>
<dbReference type="HOGENOM" id="CLU_002706_37_1_1"/>
<dbReference type="InParanoid" id="Q9FI49"/>
<dbReference type="OMA" id="VSIWNAM"/>
<dbReference type="PhylomeDB" id="Q9FI49"/>
<dbReference type="PRO" id="PR:Q9FI49"/>
<dbReference type="Proteomes" id="UP000006548">
    <property type="component" value="Chromosome 5"/>
</dbReference>
<dbReference type="ExpressionAtlas" id="Q9FI49">
    <property type="expression patterns" value="baseline and differential"/>
</dbReference>
<dbReference type="GO" id="GO:0003723">
    <property type="term" value="F:RNA binding"/>
    <property type="evidence" value="ECO:0007669"/>
    <property type="project" value="InterPro"/>
</dbReference>
<dbReference type="GO" id="GO:0008270">
    <property type="term" value="F:zinc ion binding"/>
    <property type="evidence" value="ECO:0007669"/>
    <property type="project" value="InterPro"/>
</dbReference>
<dbReference type="GO" id="GO:0009451">
    <property type="term" value="P:RNA modification"/>
    <property type="evidence" value="ECO:0007669"/>
    <property type="project" value="InterPro"/>
</dbReference>
<dbReference type="FunFam" id="1.25.40.10:FF:000242">
    <property type="entry name" value="Pentatricopeptide repeat-containing protein"/>
    <property type="match status" value="1"/>
</dbReference>
<dbReference type="Gene3D" id="1.25.40.10">
    <property type="entry name" value="Tetratricopeptide repeat domain"/>
    <property type="match status" value="2"/>
</dbReference>
<dbReference type="InterPro" id="IPR032867">
    <property type="entry name" value="DYW_dom"/>
</dbReference>
<dbReference type="InterPro" id="IPR046848">
    <property type="entry name" value="E_motif"/>
</dbReference>
<dbReference type="InterPro" id="IPR002885">
    <property type="entry name" value="Pentatricopeptide_rpt"/>
</dbReference>
<dbReference type="InterPro" id="IPR046960">
    <property type="entry name" value="PPR_At4g14850-like_plant"/>
</dbReference>
<dbReference type="InterPro" id="IPR011990">
    <property type="entry name" value="TPR-like_helical_dom_sf"/>
</dbReference>
<dbReference type="NCBIfam" id="TIGR00756">
    <property type="entry name" value="PPR"/>
    <property type="match status" value="2"/>
</dbReference>
<dbReference type="PANTHER" id="PTHR47926">
    <property type="entry name" value="PENTATRICOPEPTIDE REPEAT-CONTAINING PROTEIN"/>
    <property type="match status" value="1"/>
</dbReference>
<dbReference type="PANTHER" id="PTHR47926:SF360">
    <property type="entry name" value="PENTATRICOPEPTIDE REPEAT-CONTAINING PROTEIN"/>
    <property type="match status" value="1"/>
</dbReference>
<dbReference type="Pfam" id="PF14432">
    <property type="entry name" value="DYW_deaminase"/>
    <property type="match status" value="1"/>
</dbReference>
<dbReference type="Pfam" id="PF20431">
    <property type="entry name" value="E_motif"/>
    <property type="match status" value="1"/>
</dbReference>
<dbReference type="Pfam" id="PF01535">
    <property type="entry name" value="PPR"/>
    <property type="match status" value="1"/>
</dbReference>
<dbReference type="Pfam" id="PF13041">
    <property type="entry name" value="PPR_2"/>
    <property type="match status" value="2"/>
</dbReference>
<dbReference type="PROSITE" id="PS51375">
    <property type="entry name" value="PPR"/>
    <property type="match status" value="7"/>
</dbReference>
<accession>Q9FI49</accession>
<sequence length="534" mass="60036">MQRISINVSGIRRFCITSLSSSSASNLTDHGMLKQVLESCKAPSNSKCVLQAHAQIFKLGYGTYPSLLVSTVAAYRRCNRSYLARRLLLWFLSLSPGVCNINLIIESLMKIGESGLAKKVLRNASDQNVITWNLMIGGYVRNVQYEEALKALKNMLSFTDIKPNKFSFASSLAACARLGDLHHAKWVHSLMIDSGIELNAILSSALVDVYAKCGDIGTSREVFYSVKRNDVSIWNAMITGFATHGLATEAIRVFSEMEAEHVSPDSITFLGLLTTCSHCGLLEEGKEYFGLMSRRFSIQPKLEHYGAMVDLLGRAGRVKEAYELIESMPIEPDVVIWRSLLSSSRTYKNPELGEIAIQNLSKAKSGDYVLLSNIYSSTKKWESAQKVRELMSKEGIRKAKGKSWLEFGGMIHRFKAGDTSHIETKAIYKVLEGLIQKTKSQGFVSDTDLVLMDVSEEEKEENLNYHSEKLALAYVILKSSPGTEIRIQKNIRMCSDCHNWIKAVSKLLNRVIIMRDRIRFHRFEDGLCSCRDYW</sequence>
<keyword id="KW-1185">Reference proteome</keyword>
<keyword id="KW-0677">Repeat</keyword>
<feature type="chain" id="PRO_0000363565" description="Pentatricopeptide repeat-containing protein At5g50990">
    <location>
        <begin position="1"/>
        <end position="534"/>
    </location>
</feature>
<feature type="repeat" description="PPR 1">
    <location>
        <begin position="128"/>
        <end position="158"/>
    </location>
</feature>
<feature type="repeat" description="PPR 2">
    <location>
        <begin position="164"/>
        <end position="198"/>
    </location>
</feature>
<feature type="repeat" description="PPR 3">
    <location>
        <begin position="199"/>
        <end position="229"/>
    </location>
</feature>
<feature type="repeat" description="PPR 4">
    <location>
        <begin position="230"/>
        <end position="264"/>
    </location>
</feature>
<feature type="repeat" description="PPR 5">
    <location>
        <begin position="265"/>
        <end position="295"/>
    </location>
</feature>
<feature type="repeat" description="PPR 6">
    <location>
        <begin position="301"/>
        <end position="331"/>
    </location>
</feature>
<feature type="region of interest" description="Type E motif">
    <location>
        <begin position="336"/>
        <end position="408"/>
    </location>
</feature>
<feature type="region of interest" description="Type E(+) motif">
    <location>
        <begin position="409"/>
        <end position="439"/>
    </location>
</feature>
<feature type="region of interest" description="Type DYW motif">
    <location>
        <begin position="440"/>
        <end position="534"/>
    </location>
</feature>
<proteinExistence type="evidence at transcript level"/>
<name>PP428_ARATH</name>
<gene>
    <name type="primary">PCMP-H59</name>
    <name type="ordered locus">At5g50990</name>
    <name type="ORF">K3K7.15</name>
</gene>
<reference key="1">
    <citation type="journal article" date="1999" name="DNA Res.">
        <title>Structural analysis of Arabidopsis thaliana chromosome 5. IX. Sequence features of the regions of 1,011,550 bp covered by seventeen P1 and TAC clones.</title>
        <authorList>
            <person name="Kaneko T."/>
            <person name="Katoh T."/>
            <person name="Sato S."/>
            <person name="Nakamura Y."/>
            <person name="Asamizu E."/>
            <person name="Kotani H."/>
            <person name="Miyajima N."/>
            <person name="Tabata S."/>
        </authorList>
    </citation>
    <scope>NUCLEOTIDE SEQUENCE [LARGE SCALE GENOMIC DNA]</scope>
    <source>
        <strain>cv. Columbia</strain>
    </source>
</reference>
<reference key="2">
    <citation type="journal article" date="2017" name="Plant J.">
        <title>Araport11: a complete reannotation of the Arabidopsis thaliana reference genome.</title>
        <authorList>
            <person name="Cheng C.Y."/>
            <person name="Krishnakumar V."/>
            <person name="Chan A.P."/>
            <person name="Thibaud-Nissen F."/>
            <person name="Schobel S."/>
            <person name="Town C.D."/>
        </authorList>
    </citation>
    <scope>GENOME REANNOTATION</scope>
    <source>
        <strain>cv. Columbia</strain>
    </source>
</reference>
<reference key="3">
    <citation type="journal article" date="2000" name="Plant Mol. Biol.">
        <title>In Arabidopsis thaliana, 1% of the genome codes for a novel protein family unique to plants.</title>
        <authorList>
            <person name="Aubourg S."/>
            <person name="Boudet N."/>
            <person name="Kreis M."/>
            <person name="Lecharny A."/>
        </authorList>
    </citation>
    <scope>GENE FAMILY</scope>
</reference>
<reference key="4">
    <citation type="journal article" date="2004" name="Plant Cell">
        <title>Genome-wide analysis of Arabidopsis pentatricopeptide repeat proteins reveals their essential role in organelle biogenesis.</title>
        <authorList>
            <person name="Lurin C."/>
            <person name="Andres C."/>
            <person name="Aubourg S."/>
            <person name="Bellaoui M."/>
            <person name="Bitton F."/>
            <person name="Bruyere C."/>
            <person name="Caboche M."/>
            <person name="Debast C."/>
            <person name="Gualberto J."/>
            <person name="Hoffmann B."/>
            <person name="Lecharny A."/>
            <person name="Le Ret M."/>
            <person name="Martin-Magniette M.-L."/>
            <person name="Mireau H."/>
            <person name="Peeters N."/>
            <person name="Renou J.-P."/>
            <person name="Szurek B."/>
            <person name="Taconnat L."/>
            <person name="Small I."/>
        </authorList>
    </citation>
    <scope>GENE FAMILY</scope>
</reference>
<organism>
    <name type="scientific">Arabidopsis thaliana</name>
    <name type="common">Mouse-ear cress</name>
    <dbReference type="NCBI Taxonomy" id="3702"/>
    <lineage>
        <taxon>Eukaryota</taxon>
        <taxon>Viridiplantae</taxon>
        <taxon>Streptophyta</taxon>
        <taxon>Embryophyta</taxon>
        <taxon>Tracheophyta</taxon>
        <taxon>Spermatophyta</taxon>
        <taxon>Magnoliopsida</taxon>
        <taxon>eudicotyledons</taxon>
        <taxon>Gunneridae</taxon>
        <taxon>Pentapetalae</taxon>
        <taxon>rosids</taxon>
        <taxon>malvids</taxon>
        <taxon>Brassicales</taxon>
        <taxon>Brassicaceae</taxon>
        <taxon>Camelineae</taxon>
        <taxon>Arabidopsis</taxon>
    </lineage>
</organism>